<comment type="function">
    <text evidence="3">May play a role in triggering innate immune responses. Does not seem to play a role for any class I MHC antigen recognition.</text>
</comment>
<comment type="subcellular location">
    <subcellularLocation>
        <location evidence="2">Cell membrane</location>
        <topology evidence="1">Single-pass type I membrane protein</topology>
    </subcellularLocation>
</comment>
<comment type="subcellular location">
    <molecule>Isoform 3</molecule>
    <subcellularLocation>
        <location evidence="2">Secreted</location>
    </subcellularLocation>
</comment>
<comment type="alternative products">
    <event type="alternative splicing"/>
    <isoform>
        <id>A6NI73-1</id>
        <name>1</name>
        <name>LIR9m1</name>
        <sequence type="displayed"/>
    </isoform>
    <isoform>
        <id>A6NI73-2</id>
        <name>2</name>
        <name>LIR9m2</name>
        <sequence type="described" ref="VSP_031276"/>
    </isoform>
    <isoform>
        <id>A6NI73-3</id>
        <name>3</name>
        <name>LIR9s1</name>
        <sequence type="described" ref="VSP_031277"/>
    </isoform>
    <isoform>
        <id>A6NI73-4</id>
        <name>4</name>
        <name>LIR9s2</name>
        <sequence type="described" ref="VSP_031276 VSP_031277"/>
    </isoform>
</comment>
<comment type="tissue specificity">
    <text evidence="2">Expressed mostly in tissues of the hematopoietic system, including bone marrow, spleen, lymph node and peripheral leukocytes. Among leukocytes, monocytes and neutrophils express the highest level. Expressed in CD14+ monocytes, but not in T-cells, B-cells or natural killer (NK) cells (at protein level).</text>
</comment>
<dbReference type="EMBL" id="AF212842">
    <property type="protein sequence ID" value="AAF73849.1"/>
    <property type="molecule type" value="mRNA"/>
</dbReference>
<dbReference type="EMBL" id="AF324830">
    <property type="protein sequence ID" value="AAK52451.1"/>
    <property type="molecule type" value="mRNA"/>
</dbReference>
<dbReference type="EMBL" id="AF499916">
    <property type="protein sequence ID" value="AAN27925.1"/>
    <property type="molecule type" value="mRNA"/>
</dbReference>
<dbReference type="EMBL" id="AF499917">
    <property type="protein sequence ID" value="AAN27926.1"/>
    <property type="molecule type" value="mRNA"/>
</dbReference>
<dbReference type="EMBL" id="AF499918">
    <property type="protein sequence ID" value="AAN27927.1"/>
    <property type="molecule type" value="mRNA"/>
</dbReference>
<dbReference type="EMBL" id="AF499919">
    <property type="protein sequence ID" value="AAN27928.1"/>
    <property type="molecule type" value="mRNA"/>
</dbReference>
<dbReference type="EMBL" id="AC008984">
    <property type="status" value="NOT_ANNOTATED_CDS"/>
    <property type="molecule type" value="Genomic_DNA"/>
</dbReference>
<dbReference type="EMBL" id="CH471135">
    <property type="protein sequence ID" value="EAW72226.1"/>
    <property type="molecule type" value="Genomic_DNA"/>
</dbReference>
<dbReference type="EMBL" id="CH471135">
    <property type="protein sequence ID" value="EAW72227.1"/>
    <property type="molecule type" value="Genomic_DNA"/>
</dbReference>
<dbReference type="CCDS" id="CCDS12888.1">
    <molecule id="A6NI73-1"/>
</dbReference>
<dbReference type="CCDS" id="CCDS12889.1">
    <molecule id="A6NI73-2"/>
</dbReference>
<dbReference type="RefSeq" id="NP_067073.1">
    <molecule id="A6NI73-1"/>
    <property type="nucleotide sequence ID" value="NM_021250.4"/>
</dbReference>
<dbReference type="RefSeq" id="NP_870994.1">
    <molecule id="A6NI73-3"/>
    <property type="nucleotide sequence ID" value="NM_181879.3"/>
</dbReference>
<dbReference type="RefSeq" id="NP_871714.1">
    <molecule id="A6NI73-2"/>
    <property type="nucleotide sequence ID" value="NM_181985.4"/>
</dbReference>
<dbReference type="RefSeq" id="NP_871715.1">
    <molecule id="A6NI73-4"/>
    <property type="nucleotide sequence ID" value="NM_181986.3"/>
</dbReference>
<dbReference type="PDB" id="2D3V">
    <property type="method" value="X-ray"/>
    <property type="resolution" value="1.85 A"/>
    <property type="chains" value="A=42-237"/>
</dbReference>
<dbReference type="PDBsum" id="2D3V"/>
<dbReference type="SMR" id="A6NI73"/>
<dbReference type="BioGRID" id="131702">
    <property type="interactions" value="46"/>
</dbReference>
<dbReference type="FunCoup" id="A6NI73">
    <property type="interactions" value="87"/>
</dbReference>
<dbReference type="IntAct" id="A6NI73">
    <property type="interactions" value="30"/>
</dbReference>
<dbReference type="STRING" id="9606.ENSP00000404236"/>
<dbReference type="GlyCosmos" id="A6NI73">
    <property type="glycosylation" value="3 sites, No reported glycans"/>
</dbReference>
<dbReference type="GlyGen" id="A6NI73">
    <property type="glycosylation" value="6 sites, 1 O-linked glycan (2 sites)"/>
</dbReference>
<dbReference type="iPTMnet" id="A6NI73"/>
<dbReference type="PhosphoSitePlus" id="A6NI73"/>
<dbReference type="BioMuta" id="LILRA5"/>
<dbReference type="MassIVE" id="A6NI73"/>
<dbReference type="PaxDb" id="9606-ENSP00000404236"/>
<dbReference type="PeptideAtlas" id="A6NI73"/>
<dbReference type="ProteomicsDB" id="1250">
    <molecule id="A6NI73-1"/>
</dbReference>
<dbReference type="ProteomicsDB" id="1251">
    <molecule id="A6NI73-2"/>
</dbReference>
<dbReference type="ProteomicsDB" id="1252">
    <molecule id="A6NI73-3"/>
</dbReference>
<dbReference type="ProteomicsDB" id="1253">
    <molecule id="A6NI73-4"/>
</dbReference>
<dbReference type="Antibodypedia" id="46350">
    <property type="antibodies" value="172 antibodies from 27 providers"/>
</dbReference>
<dbReference type="DNASU" id="353514"/>
<dbReference type="Ensembl" id="ENST00000432233.8">
    <molecule id="A6NI73-1"/>
    <property type="protein sequence ID" value="ENSP00000404236.4"/>
    <property type="gene ID" value="ENSG00000187116.14"/>
</dbReference>
<dbReference type="Ensembl" id="ENST00000486742.2">
    <molecule id="A6NI73-2"/>
    <property type="protein sequence ID" value="ENSP00000484372.1"/>
    <property type="gene ID" value="ENSG00000187116.14"/>
</dbReference>
<dbReference type="Ensembl" id="ENST00000611164.4">
    <molecule id="A6NI73-2"/>
    <property type="protein sequence ID" value="ENSP00000482658.1"/>
    <property type="gene ID" value="ENSG00000278355.4"/>
</dbReference>
<dbReference type="Ensembl" id="ENST00000612266.4">
    <molecule id="A6NI73-4"/>
    <property type="protein sequence ID" value="ENSP00000480436.1"/>
    <property type="gene ID" value="ENSG00000274914.4"/>
</dbReference>
<dbReference type="Ensembl" id="ENST00000612621.4">
    <molecule id="A6NI73-1"/>
    <property type="protein sequence ID" value="ENSP00000484785.1"/>
    <property type="gene ID" value="ENSG00000278355.4"/>
</dbReference>
<dbReference type="Ensembl" id="ENST00000613559.1">
    <molecule id="A6NI73-3"/>
    <property type="protein sequence ID" value="ENSP00000484775.1"/>
    <property type="gene ID" value="ENSG00000274914.4"/>
</dbReference>
<dbReference type="Ensembl" id="ENST00000614299.4">
    <molecule id="A6NI73-2"/>
    <property type="protein sequence ID" value="ENSP00000483992.1"/>
    <property type="gene ID" value="ENSG00000274914.4"/>
</dbReference>
<dbReference type="Ensembl" id="ENST00000615820.1">
    <molecule id="A6NI73-2"/>
    <property type="protein sequence ID" value="ENSP00000480204.1"/>
    <property type="gene ID" value="ENSG00000274113.4"/>
</dbReference>
<dbReference type="Ensembl" id="ENST00000616133.1">
    <molecule id="A6NI73-4"/>
    <property type="protein sequence ID" value="ENSP00000484062.1"/>
    <property type="gene ID" value="ENSG00000275404.4"/>
</dbReference>
<dbReference type="Ensembl" id="ENST00000618711.4">
    <molecule id="A6NI73-1"/>
    <property type="protein sequence ID" value="ENSP00000478354.1"/>
    <property type="gene ID" value="ENSG00000274914.4"/>
</dbReference>
<dbReference type="Ensembl" id="ENST00000619516.3">
    <molecule id="A6NI73-4"/>
    <property type="protein sequence ID" value="ENSP00000480382.1"/>
    <property type="gene ID" value="ENSG00000278355.4"/>
</dbReference>
<dbReference type="Ensembl" id="ENST00000620091.4">
    <molecule id="A6NI73-1"/>
    <property type="protein sequence ID" value="ENSP00000480458.1"/>
    <property type="gene ID" value="ENSG00000274113.4"/>
</dbReference>
<dbReference type="Ensembl" id="ENST00000620692.4">
    <molecule id="A6NI73-3"/>
    <property type="protein sequence ID" value="ENSP00000483958.1"/>
    <property type="gene ID" value="ENSG00000275404.4"/>
</dbReference>
<dbReference type="Ensembl" id="ENST00000620898.4">
    <molecule id="A6NI73-2"/>
    <property type="protein sequence ID" value="ENSP00000484869.1"/>
    <property type="gene ID" value="ENSG00000275404.4"/>
</dbReference>
<dbReference type="Ensembl" id="ENST00000621042.4">
    <molecule id="A6NI73-1"/>
    <property type="protein sequence ID" value="ENSP00000482882.1"/>
    <property type="gene ID" value="ENSG00000275404.4"/>
</dbReference>
<dbReference type="Ensembl" id="ENST00000621482.2">
    <molecule id="A6NI73-3"/>
    <property type="protein sequence ID" value="ENSP00000477785.1"/>
    <property type="gene ID" value="ENSG00000278355.4"/>
</dbReference>
<dbReference type="GeneID" id="353514"/>
<dbReference type="KEGG" id="hsa:353514"/>
<dbReference type="MANE-Select" id="ENST00000432233.8">
    <property type="protein sequence ID" value="ENSP00000404236.4"/>
    <property type="RefSeq nucleotide sequence ID" value="NM_021250.4"/>
    <property type="RefSeq protein sequence ID" value="NP_067073.1"/>
</dbReference>
<dbReference type="UCSC" id="uc032idp.1">
    <molecule id="A6NI73-1"/>
    <property type="organism name" value="human"/>
</dbReference>
<dbReference type="AGR" id="HGNC:16309"/>
<dbReference type="CTD" id="353514"/>
<dbReference type="DisGeNET" id="353514"/>
<dbReference type="GeneCards" id="LILRA5"/>
<dbReference type="HGNC" id="HGNC:16309">
    <property type="gene designation" value="LILRA5"/>
</dbReference>
<dbReference type="HPA" id="ENSG00000187116">
    <property type="expression patterns" value="Tissue enhanced (bone marrow, lymphoid tissue)"/>
</dbReference>
<dbReference type="MIM" id="606047">
    <property type="type" value="gene"/>
</dbReference>
<dbReference type="neXtProt" id="NX_A6NI73"/>
<dbReference type="OpenTargets" id="ENSG00000187116"/>
<dbReference type="PharmGKB" id="PA142671547"/>
<dbReference type="VEuPathDB" id="HostDB:ENSG00000187116"/>
<dbReference type="eggNOG" id="ENOG502RU0A">
    <property type="taxonomic scope" value="Eukaryota"/>
</dbReference>
<dbReference type="GeneTree" id="ENSGT01100000263478"/>
<dbReference type="HOGENOM" id="CLU_021100_1_4_1"/>
<dbReference type="InParanoid" id="A6NI73"/>
<dbReference type="OMA" id="TFRCYSY"/>
<dbReference type="OrthoDB" id="9808644at2759"/>
<dbReference type="PAN-GO" id="A6NI73">
    <property type="GO annotations" value="3 GO annotations based on evolutionary models"/>
</dbReference>
<dbReference type="PhylomeDB" id="A6NI73"/>
<dbReference type="TreeFam" id="TF336644"/>
<dbReference type="PathwayCommons" id="A6NI73"/>
<dbReference type="Reactome" id="R-HSA-198933">
    <property type="pathway name" value="Immunoregulatory interactions between a Lymphoid and a non-Lymphoid cell"/>
</dbReference>
<dbReference type="BioGRID-ORCS" id="353514">
    <property type="hits" value="10 hits in 1135 CRISPR screens"/>
</dbReference>
<dbReference type="EvolutionaryTrace" id="A6NI73"/>
<dbReference type="GenomeRNAi" id="353514"/>
<dbReference type="Pharos" id="A6NI73">
    <property type="development level" value="Tbio"/>
</dbReference>
<dbReference type="PRO" id="PR:A6NI73"/>
<dbReference type="Proteomes" id="UP000005640">
    <property type="component" value="Chromosome 19"/>
</dbReference>
<dbReference type="RNAct" id="A6NI73">
    <property type="molecule type" value="protein"/>
</dbReference>
<dbReference type="Bgee" id="ENSG00000187116">
    <property type="expression patterns" value="Expressed in blood and 92 other cell types or tissues"/>
</dbReference>
<dbReference type="GO" id="GO:0009986">
    <property type="term" value="C:cell surface"/>
    <property type="evidence" value="ECO:0000314"/>
    <property type="project" value="UniProtKB"/>
</dbReference>
<dbReference type="GO" id="GO:0005576">
    <property type="term" value="C:extracellular region"/>
    <property type="evidence" value="ECO:0007669"/>
    <property type="project" value="UniProtKB-SubCell"/>
</dbReference>
<dbReference type="GO" id="GO:0005615">
    <property type="term" value="C:extracellular space"/>
    <property type="evidence" value="ECO:0000315"/>
    <property type="project" value="UniProtKB"/>
</dbReference>
<dbReference type="GO" id="GO:0005886">
    <property type="term" value="C:plasma membrane"/>
    <property type="evidence" value="ECO:0000318"/>
    <property type="project" value="GO_Central"/>
</dbReference>
<dbReference type="GO" id="GO:0032396">
    <property type="term" value="F:inhibitory MHC class I receptor activity"/>
    <property type="evidence" value="ECO:0000318"/>
    <property type="project" value="GO_Central"/>
</dbReference>
<dbReference type="GO" id="GO:0019221">
    <property type="term" value="P:cytokine-mediated signaling pathway"/>
    <property type="evidence" value="ECO:0000318"/>
    <property type="project" value="GO_Central"/>
</dbReference>
<dbReference type="GO" id="GO:0002764">
    <property type="term" value="P:immune response-regulating signaling pathway"/>
    <property type="evidence" value="ECO:0000318"/>
    <property type="project" value="GO_Central"/>
</dbReference>
<dbReference type="GO" id="GO:0045087">
    <property type="term" value="P:innate immune response"/>
    <property type="evidence" value="ECO:0007669"/>
    <property type="project" value="UniProtKB-KW"/>
</dbReference>
<dbReference type="GO" id="GO:0032695">
    <property type="term" value="P:negative regulation of interleukin-12 production"/>
    <property type="evidence" value="ECO:0000314"/>
    <property type="project" value="UniProtKB"/>
</dbReference>
<dbReference type="GO" id="GO:0032696">
    <property type="term" value="P:negative regulation of interleukin-13 production"/>
    <property type="evidence" value="ECO:0000314"/>
    <property type="project" value="UniProtKB"/>
</dbReference>
<dbReference type="GO" id="GO:0051928">
    <property type="term" value="P:positive regulation of calcium ion transport"/>
    <property type="evidence" value="ECO:0000314"/>
    <property type="project" value="UniProtKB"/>
</dbReference>
<dbReference type="GO" id="GO:0050867">
    <property type="term" value="P:positive regulation of cell activation"/>
    <property type="evidence" value="ECO:0000314"/>
    <property type="project" value="UniProtKB"/>
</dbReference>
<dbReference type="GO" id="GO:0050729">
    <property type="term" value="P:positive regulation of inflammatory response"/>
    <property type="evidence" value="ECO:0000314"/>
    <property type="project" value="UniProtKB"/>
</dbReference>
<dbReference type="GO" id="GO:0032731">
    <property type="term" value="P:positive regulation of interleukin-1 beta production"/>
    <property type="evidence" value="ECO:0000314"/>
    <property type="project" value="UniProtKB"/>
</dbReference>
<dbReference type="GO" id="GO:0032733">
    <property type="term" value="P:positive regulation of interleukin-10 production"/>
    <property type="evidence" value="ECO:0000314"/>
    <property type="project" value="UniProtKB"/>
</dbReference>
<dbReference type="GO" id="GO:0032755">
    <property type="term" value="P:positive regulation of interleukin-6 production"/>
    <property type="evidence" value="ECO:0000314"/>
    <property type="project" value="UniProtKB"/>
</dbReference>
<dbReference type="GO" id="GO:0043410">
    <property type="term" value="P:positive regulation of MAPK cascade"/>
    <property type="evidence" value="ECO:0000315"/>
    <property type="project" value="UniProtKB"/>
</dbReference>
<dbReference type="GO" id="GO:0061098">
    <property type="term" value="P:positive regulation of protein tyrosine kinase activity"/>
    <property type="evidence" value="ECO:0000315"/>
    <property type="project" value="UniProtKB"/>
</dbReference>
<dbReference type="GO" id="GO:0032760">
    <property type="term" value="P:positive regulation of tumor necrosis factor production"/>
    <property type="evidence" value="ECO:0000314"/>
    <property type="project" value="UniProtKB"/>
</dbReference>
<dbReference type="CDD" id="cd05751">
    <property type="entry name" value="IgC2_D1_LILR_KIR_like"/>
    <property type="match status" value="1"/>
</dbReference>
<dbReference type="CDD" id="cd05711">
    <property type="entry name" value="IgC2_D2_LILR_KIR_like"/>
    <property type="match status" value="1"/>
</dbReference>
<dbReference type="DisProt" id="DP02812"/>
<dbReference type="FunFam" id="2.60.40.10:FF:000049">
    <property type="entry name" value="Leukocyte immunoglobulin-like receptor subfamily B member 1"/>
    <property type="match status" value="2"/>
</dbReference>
<dbReference type="Gene3D" id="2.60.40.10">
    <property type="entry name" value="Immunoglobulins"/>
    <property type="match status" value="2"/>
</dbReference>
<dbReference type="InterPro" id="IPR036179">
    <property type="entry name" value="Ig-like_dom_sf"/>
</dbReference>
<dbReference type="InterPro" id="IPR013783">
    <property type="entry name" value="Ig-like_fold"/>
</dbReference>
<dbReference type="InterPro" id="IPR050412">
    <property type="entry name" value="Ig-like_Receptors_ImmuneReg"/>
</dbReference>
<dbReference type="InterPro" id="IPR003599">
    <property type="entry name" value="Ig_sub"/>
</dbReference>
<dbReference type="InterPro" id="IPR003598">
    <property type="entry name" value="Ig_sub2"/>
</dbReference>
<dbReference type="PANTHER" id="PTHR11738:SF179">
    <property type="entry name" value="LEUKOCYTE IMMUNOGLOBULIN-LIKE RECEPTOR SUBFAMILY A MEMBER 5"/>
    <property type="match status" value="1"/>
</dbReference>
<dbReference type="PANTHER" id="PTHR11738">
    <property type="entry name" value="MHC CLASS I NK CELL RECEPTOR"/>
    <property type="match status" value="1"/>
</dbReference>
<dbReference type="Pfam" id="PF13895">
    <property type="entry name" value="Ig_2"/>
    <property type="match status" value="1"/>
</dbReference>
<dbReference type="SMART" id="SM00409">
    <property type="entry name" value="IG"/>
    <property type="match status" value="2"/>
</dbReference>
<dbReference type="SMART" id="SM00408">
    <property type="entry name" value="IGc2"/>
    <property type="match status" value="1"/>
</dbReference>
<dbReference type="SUPFAM" id="SSF48726">
    <property type="entry name" value="Immunoglobulin"/>
    <property type="match status" value="2"/>
</dbReference>
<keyword id="KW-0002">3D-structure</keyword>
<keyword id="KW-0025">Alternative splicing</keyword>
<keyword id="KW-1003">Cell membrane</keyword>
<keyword id="KW-1015">Disulfide bond</keyword>
<keyword id="KW-0325">Glycoprotein</keyword>
<keyword id="KW-0391">Immunity</keyword>
<keyword id="KW-0393">Immunoglobulin domain</keyword>
<keyword id="KW-0399">Innate immunity</keyword>
<keyword id="KW-0472">Membrane</keyword>
<keyword id="KW-1267">Proteomics identification</keyword>
<keyword id="KW-0675">Receptor</keyword>
<keyword id="KW-1185">Reference proteome</keyword>
<keyword id="KW-0677">Repeat</keyword>
<keyword id="KW-0964">Secreted</keyword>
<keyword id="KW-0732">Signal</keyword>
<keyword id="KW-0812">Transmembrane</keyword>
<keyword id="KW-1133">Transmembrane helix</keyword>
<protein>
    <recommendedName>
        <fullName>Leukocyte immunoglobulin-like receptor subfamily A member 5</fullName>
    </recommendedName>
    <alternativeName>
        <fullName>CD85 antigen-like family member F</fullName>
    </alternativeName>
    <alternativeName>
        <fullName>Immunoglobulin-like transcript 11</fullName>
        <shortName>ILT-11</shortName>
    </alternativeName>
    <alternativeName>
        <fullName>Leukocyte immunoglobulin-like receptor 9</fullName>
        <shortName>LIR-9</shortName>
    </alternativeName>
    <cdAntigenName>CD85f</cdAntigenName>
</protein>
<sequence length="299" mass="32755">MAPWSHPSAQLQPVGGDAVSPALMVLLCLGLSLGPRTHVQAGNLSKATLWAEPGSVISRGNSVTIRCQGTLEAQEYRLVKEGSPEPWDTQNPLEPKNKARFSIPSMTEHHAGRYRCYYYSPAGWSEPSDPLELVVTGFYNKPTLSALPSPVVTSGENVTLQCGSRLRFDRFILTEEGDHKLSWTLDSQLTPSGQFQALFPVGPVTPSHRWMLRCYGSRRHILQVWSEPSDLLEIPVSGAADNLSPSQNKSDSGTASHLQDYAVENLIRMGMAGLILVVLGILIFQDWHSQRSPQAAAGR</sequence>
<organism>
    <name type="scientific">Homo sapiens</name>
    <name type="common">Human</name>
    <dbReference type="NCBI Taxonomy" id="9606"/>
    <lineage>
        <taxon>Eukaryota</taxon>
        <taxon>Metazoa</taxon>
        <taxon>Chordata</taxon>
        <taxon>Craniata</taxon>
        <taxon>Vertebrata</taxon>
        <taxon>Euteleostomi</taxon>
        <taxon>Mammalia</taxon>
        <taxon>Eutheria</taxon>
        <taxon>Euarchontoglires</taxon>
        <taxon>Primates</taxon>
        <taxon>Haplorrhini</taxon>
        <taxon>Catarrhini</taxon>
        <taxon>Hominidae</taxon>
        <taxon>Homo</taxon>
    </lineage>
</organism>
<gene>
    <name type="primary">LILRA5</name>
    <name type="synonym">ILT11</name>
    <name type="synonym">LILRB7</name>
    <name type="synonym">LIR9</name>
</gene>
<evidence type="ECO:0000255" key="1"/>
<evidence type="ECO:0000269" key="2">
    <source>
    </source>
</evidence>
<evidence type="ECO:0000269" key="3">
    <source>
    </source>
</evidence>
<evidence type="ECO:0000303" key="4">
    <source>
    </source>
</evidence>
<evidence type="ECO:0000305" key="5"/>
<evidence type="ECO:0007744" key="6">
    <source>
        <dbReference type="PDB" id="2D3V"/>
    </source>
</evidence>
<evidence type="ECO:0007829" key="7">
    <source>
        <dbReference type="PDB" id="2D3V"/>
    </source>
</evidence>
<name>LIRA5_HUMAN</name>
<proteinExistence type="evidence at protein level"/>
<feature type="signal peptide" evidence="1">
    <location>
        <begin position="1"/>
        <end position="41"/>
    </location>
</feature>
<feature type="chain" id="PRO_0000318708" description="Leukocyte immunoglobulin-like receptor subfamily A member 5">
    <location>
        <begin position="42"/>
        <end position="299"/>
    </location>
</feature>
<feature type="topological domain" description="Extracellular" evidence="1">
    <location>
        <begin position="42"/>
        <end position="268"/>
    </location>
</feature>
<feature type="transmembrane region" description="Helical" evidence="1">
    <location>
        <begin position="269"/>
        <end position="289"/>
    </location>
</feature>
<feature type="topological domain" description="Cytoplasmic" evidence="1">
    <location>
        <begin position="290"/>
        <end position="299"/>
    </location>
</feature>
<feature type="domain" description="Ig-like C2-type 1">
    <location>
        <begin position="51"/>
        <end position="136"/>
    </location>
</feature>
<feature type="domain" description="Ig-like C2-type 2">
    <location>
        <begin position="142"/>
        <end position="230"/>
    </location>
</feature>
<feature type="glycosylation site" description="N-linked (GlcNAc...) asparagine" evidence="1">
    <location>
        <position position="43"/>
    </location>
</feature>
<feature type="glycosylation site" description="N-linked (GlcNAc...) asparagine" evidence="1">
    <location>
        <position position="157"/>
    </location>
</feature>
<feature type="glycosylation site" description="N-linked (GlcNAc...) asparagine" evidence="1">
    <location>
        <position position="248"/>
    </location>
</feature>
<feature type="disulfide bond" evidence="3 6">
    <location>
        <begin position="67"/>
        <end position="116"/>
    </location>
</feature>
<feature type="disulfide bond" evidence="3 6">
    <location>
        <begin position="162"/>
        <end position="214"/>
    </location>
</feature>
<feature type="splice variant" id="VSP_031276" description="In isoform 2 and isoform 4." evidence="4">
    <location>
        <begin position="31"/>
        <end position="42"/>
    </location>
</feature>
<feature type="splice variant" id="VSP_031277" description="In isoform 3 and isoform 4." evidence="4">
    <original>AADNLSPSQNKSDSGTASHLQDYAVENLIRMGMAGLILVVLGILIFQDWHSQRSPQAAAGR</original>
    <variation>EEATVFSSTIQGSQTGCGELYRQGSPC</variation>
    <location>
        <begin position="239"/>
        <end position="299"/>
    </location>
</feature>
<feature type="sequence conflict" description="In Ref. 1; AAF73849." evidence="5" ref="1">
    <original>R</original>
    <variation>G</variation>
    <location>
        <position position="100"/>
    </location>
</feature>
<feature type="sequence conflict" description="In Ref. 1; AAF73849." evidence="5" ref="1">
    <original>H</original>
    <variation>R</variation>
    <location>
        <position position="220"/>
    </location>
</feature>
<feature type="strand" evidence="7">
    <location>
        <begin position="48"/>
        <end position="53"/>
    </location>
</feature>
<feature type="strand" evidence="7">
    <location>
        <begin position="55"/>
        <end position="58"/>
    </location>
</feature>
<feature type="strand" evidence="7">
    <location>
        <begin position="63"/>
        <end position="68"/>
    </location>
</feature>
<feature type="strand" evidence="7">
    <location>
        <begin position="75"/>
        <end position="80"/>
    </location>
</feature>
<feature type="strand" evidence="7">
    <location>
        <begin position="87"/>
        <end position="90"/>
    </location>
</feature>
<feature type="strand" evidence="7">
    <location>
        <begin position="98"/>
        <end position="105"/>
    </location>
</feature>
<feature type="helix" evidence="7">
    <location>
        <begin position="108"/>
        <end position="110"/>
    </location>
</feature>
<feature type="strand" evidence="7">
    <location>
        <begin position="112"/>
        <end position="120"/>
    </location>
</feature>
<feature type="strand" evidence="7">
    <location>
        <begin position="131"/>
        <end position="136"/>
    </location>
</feature>
<feature type="strand" evidence="7">
    <location>
        <begin position="143"/>
        <end position="145"/>
    </location>
</feature>
<feature type="strand" evidence="7">
    <location>
        <begin position="159"/>
        <end position="166"/>
    </location>
</feature>
<feature type="strand" evidence="7">
    <location>
        <begin position="169"/>
        <end position="175"/>
    </location>
</feature>
<feature type="strand" evidence="7">
    <location>
        <begin position="182"/>
        <end position="186"/>
    </location>
</feature>
<feature type="strand" evidence="7">
    <location>
        <begin position="195"/>
        <end position="200"/>
    </location>
</feature>
<feature type="strand" evidence="7">
    <location>
        <begin position="210"/>
        <end position="218"/>
    </location>
</feature>
<feature type="strand" evidence="7">
    <location>
        <begin position="221"/>
        <end position="225"/>
    </location>
</feature>
<feature type="strand" evidence="7">
    <location>
        <begin position="232"/>
        <end position="234"/>
    </location>
</feature>
<accession>A6NI73</accession>
<accession>A6NHI3</accession>
<reference key="1">
    <citation type="journal article" date="2000" name="Immunogenetics">
        <title>Extensive gene duplications and a large inversion characterize the human leukocyte receptor cluster.</title>
        <authorList>
            <person name="Wende H."/>
            <person name="Volz A."/>
            <person name="Ziegler A."/>
        </authorList>
    </citation>
    <scope>NUCLEOTIDE SEQUENCE [MRNA] (ISOFORM 1)</scope>
</reference>
<reference key="2">
    <citation type="journal article" date="2003" name="Blood">
        <title>LIR9, an immunoglobulin-superfamily-activating receptor, is expressed as a transmembrane and as a secreted molecule.</title>
        <authorList>
            <person name="Borges L."/>
            <person name="Kubin M."/>
            <person name="Kuhlman T."/>
        </authorList>
    </citation>
    <scope>NUCLEOTIDE SEQUENCE [MRNA] (ISOFORMS 1; 2; 3 AND 4)</scope>
    <scope>TISSUE SPECIFICITY</scope>
    <scope>SUBCELLULAR LOCATION</scope>
</reference>
<reference key="3">
    <citation type="journal article" date="2004" name="Nature">
        <title>The DNA sequence and biology of human chromosome 19.</title>
        <authorList>
            <person name="Grimwood J."/>
            <person name="Gordon L.A."/>
            <person name="Olsen A.S."/>
            <person name="Terry A."/>
            <person name="Schmutz J."/>
            <person name="Lamerdin J.E."/>
            <person name="Hellsten U."/>
            <person name="Goodstein D."/>
            <person name="Couronne O."/>
            <person name="Tran-Gyamfi M."/>
            <person name="Aerts A."/>
            <person name="Altherr M."/>
            <person name="Ashworth L."/>
            <person name="Bajorek E."/>
            <person name="Black S."/>
            <person name="Branscomb E."/>
            <person name="Caenepeel S."/>
            <person name="Carrano A.V."/>
            <person name="Caoile C."/>
            <person name="Chan Y.M."/>
            <person name="Christensen M."/>
            <person name="Cleland C.A."/>
            <person name="Copeland A."/>
            <person name="Dalin E."/>
            <person name="Dehal P."/>
            <person name="Denys M."/>
            <person name="Detter J.C."/>
            <person name="Escobar J."/>
            <person name="Flowers D."/>
            <person name="Fotopulos D."/>
            <person name="Garcia C."/>
            <person name="Georgescu A.M."/>
            <person name="Glavina T."/>
            <person name="Gomez M."/>
            <person name="Gonzales E."/>
            <person name="Groza M."/>
            <person name="Hammon N."/>
            <person name="Hawkins T."/>
            <person name="Haydu L."/>
            <person name="Ho I."/>
            <person name="Huang W."/>
            <person name="Israni S."/>
            <person name="Jett J."/>
            <person name="Kadner K."/>
            <person name="Kimball H."/>
            <person name="Kobayashi A."/>
            <person name="Larionov V."/>
            <person name="Leem S.-H."/>
            <person name="Lopez F."/>
            <person name="Lou Y."/>
            <person name="Lowry S."/>
            <person name="Malfatti S."/>
            <person name="Martinez D."/>
            <person name="McCready P.M."/>
            <person name="Medina C."/>
            <person name="Morgan J."/>
            <person name="Nelson K."/>
            <person name="Nolan M."/>
            <person name="Ovcharenko I."/>
            <person name="Pitluck S."/>
            <person name="Pollard M."/>
            <person name="Popkie A.P."/>
            <person name="Predki P."/>
            <person name="Quan G."/>
            <person name="Ramirez L."/>
            <person name="Rash S."/>
            <person name="Retterer J."/>
            <person name="Rodriguez A."/>
            <person name="Rogers S."/>
            <person name="Salamov A."/>
            <person name="Salazar A."/>
            <person name="She X."/>
            <person name="Smith D."/>
            <person name="Slezak T."/>
            <person name="Solovyev V."/>
            <person name="Thayer N."/>
            <person name="Tice H."/>
            <person name="Tsai M."/>
            <person name="Ustaszewska A."/>
            <person name="Vo N."/>
            <person name="Wagner M."/>
            <person name="Wheeler J."/>
            <person name="Wu K."/>
            <person name="Xie G."/>
            <person name="Yang J."/>
            <person name="Dubchak I."/>
            <person name="Furey T.S."/>
            <person name="DeJong P."/>
            <person name="Dickson M."/>
            <person name="Gordon D."/>
            <person name="Eichler E.E."/>
            <person name="Pennacchio L.A."/>
            <person name="Richardson P."/>
            <person name="Stubbs L."/>
            <person name="Rokhsar D.S."/>
            <person name="Myers R.M."/>
            <person name="Rubin E.M."/>
            <person name="Lucas S.M."/>
        </authorList>
    </citation>
    <scope>NUCLEOTIDE SEQUENCE [LARGE SCALE GENOMIC DNA]</scope>
</reference>
<reference key="4">
    <citation type="submission" date="2005-07" db="EMBL/GenBank/DDBJ databases">
        <authorList>
            <person name="Mural R.J."/>
            <person name="Istrail S."/>
            <person name="Sutton G.G."/>
            <person name="Florea L."/>
            <person name="Halpern A.L."/>
            <person name="Mobarry C.M."/>
            <person name="Lippert R."/>
            <person name="Walenz B."/>
            <person name="Shatkay H."/>
            <person name="Dew I."/>
            <person name="Miller J.R."/>
            <person name="Flanigan M.J."/>
            <person name="Edwards N.J."/>
            <person name="Bolanos R."/>
            <person name="Fasulo D."/>
            <person name="Halldorsson B.V."/>
            <person name="Hannenhalli S."/>
            <person name="Turner R."/>
            <person name="Yooseph S."/>
            <person name="Lu F."/>
            <person name="Nusskern D.R."/>
            <person name="Shue B.C."/>
            <person name="Zheng X.H."/>
            <person name="Zhong F."/>
            <person name="Delcher A.L."/>
            <person name="Huson D.H."/>
            <person name="Kravitz S.A."/>
            <person name="Mouchard L."/>
            <person name="Reinert K."/>
            <person name="Remington K.A."/>
            <person name="Clark A.G."/>
            <person name="Waterman M.S."/>
            <person name="Eichler E.E."/>
            <person name="Adams M.D."/>
            <person name="Hunkapiller M.W."/>
            <person name="Myers E.W."/>
            <person name="Venter J.C."/>
        </authorList>
    </citation>
    <scope>NUCLEOTIDE SEQUENCE [LARGE SCALE GENOMIC DNA]</scope>
</reference>
<reference key="5">
    <citation type="journal article" date="2006" name="J. Biol. Chem.">
        <title>Crystal structure of the human monocyte-activating receptor, 'Group 2' leukocyte Ig-like receptor A5 (LILRA5/LIR9/ILT11).</title>
        <authorList>
            <person name="Shiroishi M."/>
            <person name="Kajikawa M."/>
            <person name="Kuroki K."/>
            <person name="Ose T."/>
            <person name="Kohda D."/>
            <person name="Maenaka K."/>
        </authorList>
    </citation>
    <scope>X-RAY CRYSTALLOGRAPHY (1.85 ANGSTROMS) OF 42-237</scope>
    <scope>FUNCTION</scope>
    <scope>DISULFIDE BOND</scope>
</reference>